<organism>
    <name type="scientific">Caenorhabditis briggsae</name>
    <dbReference type="NCBI Taxonomy" id="6238"/>
    <lineage>
        <taxon>Eukaryota</taxon>
        <taxon>Metazoa</taxon>
        <taxon>Ecdysozoa</taxon>
        <taxon>Nematoda</taxon>
        <taxon>Chromadorea</taxon>
        <taxon>Rhabditida</taxon>
        <taxon>Rhabditina</taxon>
        <taxon>Rhabditomorpha</taxon>
        <taxon>Rhabditoidea</taxon>
        <taxon>Rhabditidae</taxon>
        <taxon>Peloderinae</taxon>
        <taxon>Caenorhabditis</taxon>
    </lineage>
</organism>
<proteinExistence type="inferred from homology"/>
<keyword id="KW-0028">Amino-acid biosynthesis</keyword>
<keyword id="KW-0963">Cytoplasm</keyword>
<keyword id="KW-0378">Hydrolase</keyword>
<keyword id="KW-0460">Magnesium</keyword>
<keyword id="KW-0479">Metal-binding</keyword>
<keyword id="KW-0486">Methionine biosynthesis</keyword>
<keyword id="KW-0539">Nucleus</keyword>
<keyword id="KW-1185">Reference proteome</keyword>
<gene>
    <name type="ORF">CBG23332</name>
</gene>
<comment type="function">
    <text evidence="1">Bifunctional enzyme that catalyzes the enolization of 2,3-diketo-5-methylthiopentyl-1-phosphate (DK-MTP-1-P) into the intermediate 2-hydroxy-3-keto-5-methylthiopentenyl-1-phosphate (HK-MTPenyl-1-P), which is then dephosphorylated to form the acireductone 1,2-dihydroxy-3-keto-5-methylthiopentene (DHK-MTPene).</text>
</comment>
<comment type="catalytic activity">
    <reaction evidence="1">
        <text>5-methylsulfanyl-2,3-dioxopentyl phosphate + H2O = 1,2-dihydroxy-5-(methylsulfanyl)pent-1-en-3-one + phosphate</text>
        <dbReference type="Rhea" id="RHEA:21700"/>
        <dbReference type="ChEBI" id="CHEBI:15377"/>
        <dbReference type="ChEBI" id="CHEBI:43474"/>
        <dbReference type="ChEBI" id="CHEBI:49252"/>
        <dbReference type="ChEBI" id="CHEBI:58828"/>
        <dbReference type="EC" id="3.1.3.77"/>
    </reaction>
</comment>
<comment type="cofactor">
    <cofactor evidence="1">
        <name>Mg(2+)</name>
        <dbReference type="ChEBI" id="CHEBI:18420"/>
    </cofactor>
    <text evidence="1">Binds 1 Mg(2+) ion per subunit.</text>
</comment>
<comment type="pathway">
    <text evidence="1">Amino-acid biosynthesis; L-methionine biosynthesis via salvage pathway; L-methionine from S-methyl-5-thio-alpha-D-ribose 1-phosphate: step 3/6.</text>
</comment>
<comment type="pathway">
    <text evidence="1">Amino-acid biosynthesis; L-methionine biosynthesis via salvage pathway; L-methionine from S-methyl-5-thio-alpha-D-ribose 1-phosphate: step 4/6.</text>
</comment>
<comment type="subunit">
    <text evidence="1">Monomer.</text>
</comment>
<comment type="subcellular location">
    <subcellularLocation>
        <location evidence="1">Cytoplasm</location>
    </subcellularLocation>
    <subcellularLocation>
        <location evidence="1">Nucleus</location>
    </subcellularLocation>
</comment>
<comment type="similarity">
    <text evidence="1">Belongs to the HAD-like hydrolase superfamily. MasA/MtnC family.</text>
</comment>
<accession>A8Y461</accession>
<sequence>MTNTTTIQFNALLLDIEGTITSISFVKDELFPYAFENVGKYLEEHYDKPATQIIIEDLRRLAEQQLETDADVVKIRERKQECIEDVTKNVRHWIKRDKKLTPMKALQGLIWEEAYQRGYVKGHVYPDVLPILKIIESRQIPIYIYSSGSVHAQKLLFANSVEGDMTKILYGYFDTNIGLKGETSSYTKISEQIGVPEKDILFLTDVEAEAAAASKAGLQTRLVIRPGNATLTQEAKNAYGTIHTLEEIL</sequence>
<dbReference type="EC" id="3.1.3.77" evidence="1"/>
<dbReference type="EMBL" id="HE601533">
    <property type="protein sequence ID" value="CAP39681.1"/>
    <property type="molecule type" value="Genomic_DNA"/>
</dbReference>
<dbReference type="RefSeq" id="XP_002636628.1">
    <property type="nucleotide sequence ID" value="XM_002636582.1"/>
</dbReference>
<dbReference type="SMR" id="A8Y461"/>
<dbReference type="FunCoup" id="A8Y461">
    <property type="interactions" value="3022"/>
</dbReference>
<dbReference type="STRING" id="6238.A8Y461"/>
<dbReference type="EnsemblMetazoa" id="CBG23332.1">
    <property type="protein sequence ID" value="CBG23332.1"/>
    <property type="gene ID" value="WBGene00041706"/>
</dbReference>
<dbReference type="GeneID" id="8578623"/>
<dbReference type="KEGG" id="cbr:CBG_23332"/>
<dbReference type="CTD" id="8578623"/>
<dbReference type="WormBase" id="CBG23332">
    <property type="protein sequence ID" value="CBP12398"/>
    <property type="gene ID" value="WBGene00041706"/>
</dbReference>
<dbReference type="eggNOG" id="KOG2630">
    <property type="taxonomic scope" value="Eukaryota"/>
</dbReference>
<dbReference type="HOGENOM" id="CLU_023273_0_0_1"/>
<dbReference type="InParanoid" id="A8Y461"/>
<dbReference type="OMA" id="LQGMVWE"/>
<dbReference type="UniPathway" id="UPA00904">
    <property type="reaction ID" value="UER00876"/>
</dbReference>
<dbReference type="UniPathway" id="UPA00904">
    <property type="reaction ID" value="UER00877"/>
</dbReference>
<dbReference type="Proteomes" id="UP000008549">
    <property type="component" value="Unassembled WGS sequence"/>
</dbReference>
<dbReference type="GO" id="GO:0005737">
    <property type="term" value="C:cytoplasm"/>
    <property type="evidence" value="ECO:0007669"/>
    <property type="project" value="UniProtKB-SubCell"/>
</dbReference>
<dbReference type="GO" id="GO:0005634">
    <property type="term" value="C:nucleus"/>
    <property type="evidence" value="ECO:0007669"/>
    <property type="project" value="UniProtKB-SubCell"/>
</dbReference>
<dbReference type="GO" id="GO:0043874">
    <property type="term" value="F:acireductone synthase activity"/>
    <property type="evidence" value="ECO:0000318"/>
    <property type="project" value="GO_Central"/>
</dbReference>
<dbReference type="GO" id="GO:0000287">
    <property type="term" value="F:magnesium ion binding"/>
    <property type="evidence" value="ECO:0007669"/>
    <property type="project" value="UniProtKB-UniRule"/>
</dbReference>
<dbReference type="GO" id="GO:0019509">
    <property type="term" value="P:L-methionine salvage from methylthioadenosine"/>
    <property type="evidence" value="ECO:0000318"/>
    <property type="project" value="GO_Central"/>
</dbReference>
<dbReference type="CDD" id="cd01629">
    <property type="entry name" value="HAD_EP"/>
    <property type="match status" value="1"/>
</dbReference>
<dbReference type="FunFam" id="1.10.720.60:FF:000010">
    <property type="entry name" value="Enolase-phosphatase E1"/>
    <property type="match status" value="1"/>
</dbReference>
<dbReference type="FunFam" id="3.40.50.1000:FF:000079">
    <property type="entry name" value="Enolase-phosphatase E1"/>
    <property type="match status" value="1"/>
</dbReference>
<dbReference type="Gene3D" id="1.10.720.60">
    <property type="match status" value="1"/>
</dbReference>
<dbReference type="Gene3D" id="3.40.50.1000">
    <property type="entry name" value="HAD superfamily/HAD-like"/>
    <property type="match status" value="1"/>
</dbReference>
<dbReference type="HAMAP" id="MF_01681">
    <property type="entry name" value="Salvage_MtnC"/>
    <property type="match status" value="1"/>
</dbReference>
<dbReference type="HAMAP" id="MF_03117">
    <property type="entry name" value="Salvage_MtnC_euk"/>
    <property type="match status" value="1"/>
</dbReference>
<dbReference type="InterPro" id="IPR023943">
    <property type="entry name" value="Enolase-ppase_E1"/>
</dbReference>
<dbReference type="InterPro" id="IPR027511">
    <property type="entry name" value="ENOPH1_eukaryotes"/>
</dbReference>
<dbReference type="InterPro" id="IPR036412">
    <property type="entry name" value="HAD-like_sf"/>
</dbReference>
<dbReference type="InterPro" id="IPR006439">
    <property type="entry name" value="HAD-SF_hydro_IA"/>
</dbReference>
<dbReference type="InterPro" id="IPR023214">
    <property type="entry name" value="HAD_sf"/>
</dbReference>
<dbReference type="NCBIfam" id="TIGR01691">
    <property type="entry name" value="enolase-ppase"/>
    <property type="match status" value="1"/>
</dbReference>
<dbReference type="NCBIfam" id="TIGR01549">
    <property type="entry name" value="HAD-SF-IA-v1"/>
    <property type="match status" value="1"/>
</dbReference>
<dbReference type="PANTHER" id="PTHR20371">
    <property type="entry name" value="ENOLASE-PHOSPHATASE E1"/>
    <property type="match status" value="1"/>
</dbReference>
<dbReference type="PANTHER" id="PTHR20371:SF1">
    <property type="entry name" value="ENOLASE-PHOSPHATASE E1"/>
    <property type="match status" value="1"/>
</dbReference>
<dbReference type="Pfam" id="PF00702">
    <property type="entry name" value="Hydrolase"/>
    <property type="match status" value="1"/>
</dbReference>
<dbReference type="SFLD" id="SFLDF00044">
    <property type="entry name" value="enolase-phosphatase"/>
    <property type="match status" value="1"/>
</dbReference>
<dbReference type="SFLD" id="SFLDS00003">
    <property type="entry name" value="Haloacid_Dehalogenase"/>
    <property type="match status" value="1"/>
</dbReference>
<dbReference type="SUPFAM" id="SSF56784">
    <property type="entry name" value="HAD-like"/>
    <property type="match status" value="1"/>
</dbReference>
<protein>
    <recommendedName>
        <fullName evidence="1">Enolase-phosphatase E1</fullName>
        <ecNumber evidence="1">3.1.3.77</ecNumber>
    </recommendedName>
    <alternativeName>
        <fullName evidence="1">2,3-diketo-5-methylthio-1-phosphopentane phosphatase</fullName>
    </alternativeName>
</protein>
<evidence type="ECO:0000255" key="1">
    <source>
        <dbReference type="HAMAP-Rule" id="MF_03117"/>
    </source>
</evidence>
<reference key="1">
    <citation type="journal article" date="2003" name="PLoS Biol.">
        <title>The genome sequence of Caenorhabditis briggsae: a platform for comparative genomics.</title>
        <authorList>
            <person name="Stein L.D."/>
            <person name="Bao Z."/>
            <person name="Blasiar D."/>
            <person name="Blumenthal T."/>
            <person name="Brent M.R."/>
            <person name="Chen N."/>
            <person name="Chinwalla A."/>
            <person name="Clarke L."/>
            <person name="Clee C."/>
            <person name="Coghlan A."/>
            <person name="Coulson A."/>
            <person name="D'Eustachio P."/>
            <person name="Fitch D.H.A."/>
            <person name="Fulton L.A."/>
            <person name="Fulton R.E."/>
            <person name="Griffiths-Jones S."/>
            <person name="Harris T.W."/>
            <person name="Hillier L.W."/>
            <person name="Kamath R."/>
            <person name="Kuwabara P.E."/>
            <person name="Mardis E.R."/>
            <person name="Marra M.A."/>
            <person name="Miner T.L."/>
            <person name="Minx P."/>
            <person name="Mullikin J.C."/>
            <person name="Plumb R.W."/>
            <person name="Rogers J."/>
            <person name="Schein J.E."/>
            <person name="Sohrmann M."/>
            <person name="Spieth J."/>
            <person name="Stajich J.E."/>
            <person name="Wei C."/>
            <person name="Willey D."/>
            <person name="Wilson R.K."/>
            <person name="Durbin R.M."/>
            <person name="Waterston R.H."/>
        </authorList>
    </citation>
    <scope>NUCLEOTIDE SEQUENCE [LARGE SCALE GENOMIC DNA]</scope>
    <source>
        <strain>AF16</strain>
    </source>
</reference>
<name>ENOPH_CAEBR</name>
<feature type="chain" id="PRO_0000393988" description="Enolase-phosphatase E1">
    <location>
        <begin position="1"/>
        <end position="249"/>
    </location>
</feature>
<feature type="binding site" evidence="1">
    <location>
        <position position="15"/>
    </location>
    <ligand>
        <name>Mg(2+)</name>
        <dbReference type="ChEBI" id="CHEBI:18420"/>
    </ligand>
</feature>
<feature type="binding site" evidence="1">
    <location>
        <position position="17"/>
    </location>
    <ligand>
        <name>Mg(2+)</name>
        <dbReference type="ChEBI" id="CHEBI:18420"/>
    </ligand>
</feature>
<feature type="binding site" evidence="1">
    <location>
        <begin position="146"/>
        <end position="147"/>
    </location>
    <ligand>
        <name>substrate</name>
    </ligand>
</feature>
<feature type="binding site" evidence="1">
    <location>
        <position position="180"/>
    </location>
    <ligand>
        <name>substrate</name>
    </ligand>
</feature>
<feature type="binding site" evidence="1">
    <location>
        <position position="205"/>
    </location>
    <ligand>
        <name>Mg(2+)</name>
        <dbReference type="ChEBI" id="CHEBI:18420"/>
    </ligand>
</feature>